<dbReference type="EC" id="4.2.3.4" evidence="1"/>
<dbReference type="EMBL" id="CP000668">
    <property type="protein sequence ID" value="ABP38505.1"/>
    <property type="molecule type" value="Genomic_DNA"/>
</dbReference>
<dbReference type="RefSeq" id="WP_002208898.1">
    <property type="nucleotide sequence ID" value="NZ_CP009715.1"/>
</dbReference>
<dbReference type="SMR" id="A4TGU2"/>
<dbReference type="GeneID" id="57974449"/>
<dbReference type="KEGG" id="ypp:YPDSF_0079"/>
<dbReference type="PATRIC" id="fig|386656.14.peg.489"/>
<dbReference type="UniPathway" id="UPA00053">
    <property type="reaction ID" value="UER00085"/>
</dbReference>
<dbReference type="GO" id="GO:0005737">
    <property type="term" value="C:cytoplasm"/>
    <property type="evidence" value="ECO:0007669"/>
    <property type="project" value="UniProtKB-SubCell"/>
</dbReference>
<dbReference type="GO" id="GO:0003856">
    <property type="term" value="F:3-dehydroquinate synthase activity"/>
    <property type="evidence" value="ECO:0007669"/>
    <property type="project" value="UniProtKB-UniRule"/>
</dbReference>
<dbReference type="GO" id="GO:0046872">
    <property type="term" value="F:metal ion binding"/>
    <property type="evidence" value="ECO:0007669"/>
    <property type="project" value="UniProtKB-KW"/>
</dbReference>
<dbReference type="GO" id="GO:0000166">
    <property type="term" value="F:nucleotide binding"/>
    <property type="evidence" value="ECO:0007669"/>
    <property type="project" value="UniProtKB-KW"/>
</dbReference>
<dbReference type="GO" id="GO:0008652">
    <property type="term" value="P:amino acid biosynthetic process"/>
    <property type="evidence" value="ECO:0007669"/>
    <property type="project" value="UniProtKB-KW"/>
</dbReference>
<dbReference type="GO" id="GO:0009073">
    <property type="term" value="P:aromatic amino acid family biosynthetic process"/>
    <property type="evidence" value="ECO:0007669"/>
    <property type="project" value="UniProtKB-KW"/>
</dbReference>
<dbReference type="GO" id="GO:0009423">
    <property type="term" value="P:chorismate biosynthetic process"/>
    <property type="evidence" value="ECO:0007669"/>
    <property type="project" value="UniProtKB-UniRule"/>
</dbReference>
<dbReference type="CDD" id="cd08195">
    <property type="entry name" value="DHQS"/>
    <property type="match status" value="1"/>
</dbReference>
<dbReference type="FunFam" id="1.20.1090.10:FF:000002">
    <property type="entry name" value="3-dehydroquinate synthase"/>
    <property type="match status" value="1"/>
</dbReference>
<dbReference type="FunFam" id="3.40.50.1970:FF:000001">
    <property type="entry name" value="3-dehydroquinate synthase"/>
    <property type="match status" value="1"/>
</dbReference>
<dbReference type="Gene3D" id="3.40.50.1970">
    <property type="match status" value="1"/>
</dbReference>
<dbReference type="Gene3D" id="1.20.1090.10">
    <property type="entry name" value="Dehydroquinate synthase-like - alpha domain"/>
    <property type="match status" value="1"/>
</dbReference>
<dbReference type="HAMAP" id="MF_00110">
    <property type="entry name" value="DHQ_synthase"/>
    <property type="match status" value="1"/>
</dbReference>
<dbReference type="InterPro" id="IPR050071">
    <property type="entry name" value="Dehydroquinate_synthase"/>
</dbReference>
<dbReference type="InterPro" id="IPR016037">
    <property type="entry name" value="DHQ_synth_AroB"/>
</dbReference>
<dbReference type="InterPro" id="IPR030963">
    <property type="entry name" value="DHQ_synth_fam"/>
</dbReference>
<dbReference type="InterPro" id="IPR030960">
    <property type="entry name" value="DHQS/DOIS_N"/>
</dbReference>
<dbReference type="InterPro" id="IPR056179">
    <property type="entry name" value="DHQS_C"/>
</dbReference>
<dbReference type="NCBIfam" id="TIGR01357">
    <property type="entry name" value="aroB"/>
    <property type="match status" value="1"/>
</dbReference>
<dbReference type="PANTHER" id="PTHR43622">
    <property type="entry name" value="3-DEHYDROQUINATE SYNTHASE"/>
    <property type="match status" value="1"/>
</dbReference>
<dbReference type="PANTHER" id="PTHR43622:SF7">
    <property type="entry name" value="3-DEHYDROQUINATE SYNTHASE, CHLOROPLASTIC"/>
    <property type="match status" value="1"/>
</dbReference>
<dbReference type="Pfam" id="PF01761">
    <property type="entry name" value="DHQ_synthase"/>
    <property type="match status" value="1"/>
</dbReference>
<dbReference type="Pfam" id="PF24621">
    <property type="entry name" value="DHQS_C"/>
    <property type="match status" value="1"/>
</dbReference>
<dbReference type="PIRSF" id="PIRSF001455">
    <property type="entry name" value="DHQ_synth"/>
    <property type="match status" value="1"/>
</dbReference>
<dbReference type="SUPFAM" id="SSF56796">
    <property type="entry name" value="Dehydroquinate synthase-like"/>
    <property type="match status" value="1"/>
</dbReference>
<evidence type="ECO:0000255" key="1">
    <source>
        <dbReference type="HAMAP-Rule" id="MF_00110"/>
    </source>
</evidence>
<comment type="function">
    <text evidence="1">Catalyzes the conversion of 3-deoxy-D-arabino-heptulosonate 7-phosphate (DAHP) to dehydroquinate (DHQ).</text>
</comment>
<comment type="catalytic activity">
    <reaction evidence="1">
        <text>7-phospho-2-dehydro-3-deoxy-D-arabino-heptonate = 3-dehydroquinate + phosphate</text>
        <dbReference type="Rhea" id="RHEA:21968"/>
        <dbReference type="ChEBI" id="CHEBI:32364"/>
        <dbReference type="ChEBI" id="CHEBI:43474"/>
        <dbReference type="ChEBI" id="CHEBI:58394"/>
        <dbReference type="EC" id="4.2.3.4"/>
    </reaction>
</comment>
<comment type="cofactor">
    <cofactor evidence="1">
        <name>Co(2+)</name>
        <dbReference type="ChEBI" id="CHEBI:48828"/>
    </cofactor>
    <cofactor evidence="1">
        <name>Zn(2+)</name>
        <dbReference type="ChEBI" id="CHEBI:29105"/>
    </cofactor>
    <text evidence="1">Binds 1 divalent metal cation per subunit. Can use either Co(2+) or Zn(2+).</text>
</comment>
<comment type="cofactor">
    <cofactor evidence="1">
        <name>NAD(+)</name>
        <dbReference type="ChEBI" id="CHEBI:57540"/>
    </cofactor>
</comment>
<comment type="pathway">
    <text evidence="1">Metabolic intermediate biosynthesis; chorismate biosynthesis; chorismate from D-erythrose 4-phosphate and phosphoenolpyruvate: step 2/7.</text>
</comment>
<comment type="subcellular location">
    <subcellularLocation>
        <location evidence="1">Cytoplasm</location>
    </subcellularLocation>
</comment>
<comment type="similarity">
    <text evidence="1">Belongs to the sugar phosphate cyclases superfamily. Dehydroquinate synthase family.</text>
</comment>
<feature type="chain" id="PRO_1000094663" description="3-dehydroquinate synthase">
    <location>
        <begin position="1"/>
        <end position="362"/>
    </location>
</feature>
<feature type="binding site" evidence="1">
    <location>
        <begin position="71"/>
        <end position="76"/>
    </location>
    <ligand>
        <name>NAD(+)</name>
        <dbReference type="ChEBI" id="CHEBI:57540"/>
    </ligand>
</feature>
<feature type="binding site" evidence="1">
    <location>
        <begin position="105"/>
        <end position="109"/>
    </location>
    <ligand>
        <name>NAD(+)</name>
        <dbReference type="ChEBI" id="CHEBI:57540"/>
    </ligand>
</feature>
<feature type="binding site" evidence="1">
    <location>
        <begin position="129"/>
        <end position="130"/>
    </location>
    <ligand>
        <name>NAD(+)</name>
        <dbReference type="ChEBI" id="CHEBI:57540"/>
    </ligand>
</feature>
<feature type="binding site" evidence="1">
    <location>
        <position position="142"/>
    </location>
    <ligand>
        <name>NAD(+)</name>
        <dbReference type="ChEBI" id="CHEBI:57540"/>
    </ligand>
</feature>
<feature type="binding site" evidence="1">
    <location>
        <position position="151"/>
    </location>
    <ligand>
        <name>NAD(+)</name>
        <dbReference type="ChEBI" id="CHEBI:57540"/>
    </ligand>
</feature>
<feature type="binding site" evidence="1">
    <location>
        <begin position="169"/>
        <end position="172"/>
    </location>
    <ligand>
        <name>NAD(+)</name>
        <dbReference type="ChEBI" id="CHEBI:57540"/>
    </ligand>
</feature>
<feature type="binding site" evidence="1">
    <location>
        <position position="184"/>
    </location>
    <ligand>
        <name>Zn(2+)</name>
        <dbReference type="ChEBI" id="CHEBI:29105"/>
    </ligand>
</feature>
<feature type="binding site" evidence="1">
    <location>
        <position position="248"/>
    </location>
    <ligand>
        <name>Zn(2+)</name>
        <dbReference type="ChEBI" id="CHEBI:29105"/>
    </ligand>
</feature>
<feature type="binding site" evidence="1">
    <location>
        <position position="265"/>
    </location>
    <ligand>
        <name>Zn(2+)</name>
        <dbReference type="ChEBI" id="CHEBI:29105"/>
    </ligand>
</feature>
<sequence length="362" mass="38837">MEKITVTLGERSYPITIAAGLFNDPASFKPLKAGDQVMLVTNQTLAPLYLDSLRAVLEHGGIKVDQVILPDGEQYKSLSVMEQVFSALLEKPHGRDTTLVALGGGVVGDLTGFAAACYQRGVRFIQVPTTLLSQVDSSVGGKTAVNHPLGKNMIGAFYQPASVVVDLNCLKTLPPRELASGLAEVIKYGIILDAAFFDWLENNIDALLALDMSALAYCIRRCCELKADVVAADEREESGARALLNLGHTYGHAIEAEMGYGVWLHGEAVAAGMVMAAQTSRRLGQLSVSDVERIKKLLLRAGLPVCGPKEMAPESYLPHMMRDKKVLAGELRLVLPTAIGKSEIRGGVAHDMVLASIADCRP</sequence>
<gene>
    <name evidence="1" type="primary">aroB</name>
    <name type="ordered locus">YPDSF_0079</name>
</gene>
<organism>
    <name type="scientific">Yersinia pestis (strain Pestoides F)</name>
    <dbReference type="NCBI Taxonomy" id="386656"/>
    <lineage>
        <taxon>Bacteria</taxon>
        <taxon>Pseudomonadati</taxon>
        <taxon>Pseudomonadota</taxon>
        <taxon>Gammaproteobacteria</taxon>
        <taxon>Enterobacterales</taxon>
        <taxon>Yersiniaceae</taxon>
        <taxon>Yersinia</taxon>
    </lineage>
</organism>
<name>AROB_YERPP</name>
<reference key="1">
    <citation type="submission" date="2007-02" db="EMBL/GenBank/DDBJ databases">
        <title>Complete sequence of chromosome of Yersinia pestis Pestoides F.</title>
        <authorList>
            <consortium name="US DOE Joint Genome Institute"/>
            <person name="Copeland A."/>
            <person name="Lucas S."/>
            <person name="Lapidus A."/>
            <person name="Barry K."/>
            <person name="Detter J.C."/>
            <person name="Glavina del Rio T."/>
            <person name="Hammon N."/>
            <person name="Israni S."/>
            <person name="Dalin E."/>
            <person name="Tice H."/>
            <person name="Pitluck S."/>
            <person name="Di Bartolo G."/>
            <person name="Chain P."/>
            <person name="Malfatti S."/>
            <person name="Shin M."/>
            <person name="Vergez L."/>
            <person name="Schmutz J."/>
            <person name="Larimer F."/>
            <person name="Land M."/>
            <person name="Hauser L."/>
            <person name="Worsham P."/>
            <person name="Chu M."/>
            <person name="Bearden S."/>
            <person name="Garcia E."/>
            <person name="Richardson P."/>
        </authorList>
    </citation>
    <scope>NUCLEOTIDE SEQUENCE [LARGE SCALE GENOMIC DNA]</scope>
    <source>
        <strain>Pestoides F</strain>
    </source>
</reference>
<accession>A4TGU2</accession>
<proteinExistence type="inferred from homology"/>
<keyword id="KW-0028">Amino-acid biosynthesis</keyword>
<keyword id="KW-0057">Aromatic amino acid biosynthesis</keyword>
<keyword id="KW-0170">Cobalt</keyword>
<keyword id="KW-0963">Cytoplasm</keyword>
<keyword id="KW-0456">Lyase</keyword>
<keyword id="KW-0479">Metal-binding</keyword>
<keyword id="KW-0520">NAD</keyword>
<keyword id="KW-0547">Nucleotide-binding</keyword>
<keyword id="KW-0862">Zinc</keyword>
<protein>
    <recommendedName>
        <fullName evidence="1">3-dehydroquinate synthase</fullName>
        <shortName evidence="1">DHQS</shortName>
        <ecNumber evidence="1">4.2.3.4</ecNumber>
    </recommendedName>
</protein>